<evidence type="ECO:0000255" key="1">
    <source>
        <dbReference type="HAMAP-Rule" id="MF_00564"/>
    </source>
</evidence>
<protein>
    <recommendedName>
        <fullName evidence="1">Ribonuclease PH</fullName>
        <shortName evidence="1">RNase PH</shortName>
        <ecNumber evidence="1">2.7.7.56</ecNumber>
    </recommendedName>
    <alternativeName>
        <fullName evidence="1">tRNA nucleotidyltransferase</fullName>
    </alternativeName>
</protein>
<comment type="function">
    <text evidence="1">Phosphorolytic 3'-5' exoribonuclease that plays an important role in tRNA 3'-end maturation. Removes nucleotide residues following the 3'-CCA terminus of tRNAs; can also add nucleotides to the ends of RNA molecules by using nucleoside diphosphates as substrates, but this may not be physiologically important. Probably plays a role in initiation of 16S rRNA degradation (leading to ribosome degradation) during starvation.</text>
</comment>
<comment type="catalytic activity">
    <reaction evidence="1">
        <text>tRNA(n+1) + phosphate = tRNA(n) + a ribonucleoside 5'-diphosphate</text>
        <dbReference type="Rhea" id="RHEA:10628"/>
        <dbReference type="Rhea" id="RHEA-COMP:17343"/>
        <dbReference type="Rhea" id="RHEA-COMP:17344"/>
        <dbReference type="ChEBI" id="CHEBI:43474"/>
        <dbReference type="ChEBI" id="CHEBI:57930"/>
        <dbReference type="ChEBI" id="CHEBI:173114"/>
        <dbReference type="EC" id="2.7.7.56"/>
    </reaction>
</comment>
<comment type="subunit">
    <text evidence="1">Homohexameric ring arranged as a trimer of dimers.</text>
</comment>
<comment type="similarity">
    <text evidence="1">Belongs to the RNase PH family.</text>
</comment>
<feature type="chain" id="PRO_1000024827" description="Ribonuclease PH">
    <location>
        <begin position="1"/>
        <end position="250"/>
    </location>
</feature>
<feature type="binding site" evidence="1">
    <location>
        <position position="87"/>
    </location>
    <ligand>
        <name>phosphate</name>
        <dbReference type="ChEBI" id="CHEBI:43474"/>
        <note>substrate</note>
    </ligand>
</feature>
<feature type="binding site" evidence="1">
    <location>
        <begin position="125"/>
        <end position="127"/>
    </location>
    <ligand>
        <name>phosphate</name>
        <dbReference type="ChEBI" id="CHEBI:43474"/>
        <note>substrate</note>
    </ligand>
</feature>
<proteinExistence type="inferred from homology"/>
<sequence length="250" mass="26862">MLRANGRGLRELRPVTIERHYLKYAEGSALITVGDTRVICSATVEEKVPPFLKNTGKGWITAEYSLLPRSTKERTIREVTRGRLTGRTQEIQRLIGRSLRSVVDMSLLGERTIWLDCDVLQADGGTRTAAITGSFVALAEALAGLVAAGGVPAMPLKDFLAAVSVGLVDDELILDLDFQEDSHAGVDMNVVMTGSGQLVEVQGTAEGRPFTREQLTAMLDLAGEGIESLIAIQKQVLGDIASRVGTGNDK</sequence>
<organism>
    <name type="scientific">Moorella thermoacetica (strain ATCC 39073 / JCM 9320)</name>
    <dbReference type="NCBI Taxonomy" id="264732"/>
    <lineage>
        <taxon>Bacteria</taxon>
        <taxon>Bacillati</taxon>
        <taxon>Bacillota</taxon>
        <taxon>Clostridia</taxon>
        <taxon>Moorellales</taxon>
        <taxon>Moorellaceae</taxon>
        <taxon>Moorella</taxon>
    </lineage>
</organism>
<keyword id="KW-0548">Nucleotidyltransferase</keyword>
<keyword id="KW-0694">RNA-binding</keyword>
<keyword id="KW-0698">rRNA processing</keyword>
<keyword id="KW-0808">Transferase</keyword>
<keyword id="KW-0819">tRNA processing</keyword>
<keyword id="KW-0820">tRNA-binding</keyword>
<accession>Q2RL40</accession>
<name>RNPH_MOOTA</name>
<gene>
    <name evidence="1" type="primary">rph</name>
    <name type="ordered locus">Moth_0519</name>
</gene>
<dbReference type="EC" id="2.7.7.56" evidence="1"/>
<dbReference type="EMBL" id="CP000232">
    <property type="protein sequence ID" value="ABC18849.1"/>
    <property type="molecule type" value="Genomic_DNA"/>
</dbReference>
<dbReference type="RefSeq" id="YP_429392.1">
    <property type="nucleotide sequence ID" value="NC_007644.1"/>
</dbReference>
<dbReference type="SMR" id="Q2RL40"/>
<dbReference type="STRING" id="264732.Moth_0519"/>
<dbReference type="EnsemblBacteria" id="ABC18849">
    <property type="protein sequence ID" value="ABC18849"/>
    <property type="gene ID" value="Moth_0519"/>
</dbReference>
<dbReference type="KEGG" id="mta:Moth_0519"/>
<dbReference type="PATRIC" id="fig|264732.11.peg.558"/>
<dbReference type="eggNOG" id="COG0689">
    <property type="taxonomic scope" value="Bacteria"/>
</dbReference>
<dbReference type="HOGENOM" id="CLU_050858_0_0_9"/>
<dbReference type="OrthoDB" id="9807456at2"/>
<dbReference type="GO" id="GO:0000175">
    <property type="term" value="F:3'-5'-RNA exonuclease activity"/>
    <property type="evidence" value="ECO:0007669"/>
    <property type="project" value="UniProtKB-UniRule"/>
</dbReference>
<dbReference type="GO" id="GO:0000049">
    <property type="term" value="F:tRNA binding"/>
    <property type="evidence" value="ECO:0007669"/>
    <property type="project" value="UniProtKB-UniRule"/>
</dbReference>
<dbReference type="GO" id="GO:0009022">
    <property type="term" value="F:tRNA nucleotidyltransferase activity"/>
    <property type="evidence" value="ECO:0007669"/>
    <property type="project" value="UniProtKB-UniRule"/>
</dbReference>
<dbReference type="GO" id="GO:0016075">
    <property type="term" value="P:rRNA catabolic process"/>
    <property type="evidence" value="ECO:0007669"/>
    <property type="project" value="UniProtKB-UniRule"/>
</dbReference>
<dbReference type="GO" id="GO:0006364">
    <property type="term" value="P:rRNA processing"/>
    <property type="evidence" value="ECO:0007669"/>
    <property type="project" value="UniProtKB-KW"/>
</dbReference>
<dbReference type="GO" id="GO:0008033">
    <property type="term" value="P:tRNA processing"/>
    <property type="evidence" value="ECO:0007669"/>
    <property type="project" value="UniProtKB-UniRule"/>
</dbReference>
<dbReference type="CDD" id="cd11362">
    <property type="entry name" value="RNase_PH_bact"/>
    <property type="match status" value="1"/>
</dbReference>
<dbReference type="FunFam" id="3.30.230.70:FF:000003">
    <property type="entry name" value="Ribonuclease PH"/>
    <property type="match status" value="1"/>
</dbReference>
<dbReference type="Gene3D" id="3.30.230.70">
    <property type="entry name" value="GHMP Kinase, N-terminal domain"/>
    <property type="match status" value="1"/>
</dbReference>
<dbReference type="HAMAP" id="MF_00564">
    <property type="entry name" value="RNase_PH"/>
    <property type="match status" value="1"/>
</dbReference>
<dbReference type="InterPro" id="IPR001247">
    <property type="entry name" value="ExoRNase_PH_dom1"/>
</dbReference>
<dbReference type="InterPro" id="IPR015847">
    <property type="entry name" value="ExoRNase_PH_dom2"/>
</dbReference>
<dbReference type="InterPro" id="IPR036345">
    <property type="entry name" value="ExoRNase_PH_dom2_sf"/>
</dbReference>
<dbReference type="InterPro" id="IPR027408">
    <property type="entry name" value="PNPase/RNase_PH_dom_sf"/>
</dbReference>
<dbReference type="InterPro" id="IPR020568">
    <property type="entry name" value="Ribosomal_Su5_D2-typ_SF"/>
</dbReference>
<dbReference type="InterPro" id="IPR050080">
    <property type="entry name" value="RNase_PH"/>
</dbReference>
<dbReference type="InterPro" id="IPR002381">
    <property type="entry name" value="RNase_PH_bac-type"/>
</dbReference>
<dbReference type="InterPro" id="IPR018336">
    <property type="entry name" value="RNase_PH_CS"/>
</dbReference>
<dbReference type="NCBIfam" id="TIGR01966">
    <property type="entry name" value="RNasePH"/>
    <property type="match status" value="1"/>
</dbReference>
<dbReference type="PANTHER" id="PTHR11953">
    <property type="entry name" value="EXOSOME COMPLEX COMPONENT"/>
    <property type="match status" value="1"/>
</dbReference>
<dbReference type="PANTHER" id="PTHR11953:SF0">
    <property type="entry name" value="EXOSOME COMPLEX COMPONENT RRP41"/>
    <property type="match status" value="1"/>
</dbReference>
<dbReference type="Pfam" id="PF01138">
    <property type="entry name" value="RNase_PH"/>
    <property type="match status" value="1"/>
</dbReference>
<dbReference type="Pfam" id="PF03725">
    <property type="entry name" value="RNase_PH_C"/>
    <property type="match status" value="1"/>
</dbReference>
<dbReference type="SUPFAM" id="SSF55666">
    <property type="entry name" value="Ribonuclease PH domain 2-like"/>
    <property type="match status" value="1"/>
</dbReference>
<dbReference type="SUPFAM" id="SSF54211">
    <property type="entry name" value="Ribosomal protein S5 domain 2-like"/>
    <property type="match status" value="1"/>
</dbReference>
<dbReference type="PROSITE" id="PS01277">
    <property type="entry name" value="RIBONUCLEASE_PH"/>
    <property type="match status" value="1"/>
</dbReference>
<reference key="1">
    <citation type="journal article" date="2008" name="Environ. Microbiol.">
        <title>The complete genome sequence of Moorella thermoacetica (f. Clostridium thermoaceticum).</title>
        <authorList>
            <person name="Pierce E."/>
            <person name="Xie G."/>
            <person name="Barabote R.D."/>
            <person name="Saunders E."/>
            <person name="Han C.S."/>
            <person name="Detter J.C."/>
            <person name="Richardson P."/>
            <person name="Brettin T.S."/>
            <person name="Das A."/>
            <person name="Ljungdahl L.G."/>
            <person name="Ragsdale S.W."/>
        </authorList>
    </citation>
    <scope>NUCLEOTIDE SEQUENCE [LARGE SCALE GENOMIC DNA]</scope>
    <source>
        <strain>ATCC 39073 / JCM 9320</strain>
    </source>
</reference>